<evidence type="ECO:0000250" key="1">
    <source>
        <dbReference type="UniProtKB" id="P84926"/>
    </source>
</evidence>
<evidence type="ECO:0000269" key="2">
    <source>
    </source>
</evidence>
<evidence type="ECO:0000303" key="3">
    <source>
    </source>
</evidence>
<evidence type="ECO:0000305" key="4"/>
<evidence type="ECO:0000305" key="5">
    <source>
    </source>
</evidence>
<sequence length="28" mass="2780">ALWKNMLKGIGKLAGQAALGAVKTLVGA</sequence>
<protein>
    <recommendedName>
        <fullName evidence="3">Dermaseptin-6TR</fullName>
    </recommendedName>
</protein>
<name>DRS6_PHYTB</name>
<proteinExistence type="evidence at protein level"/>
<reference evidence="4" key="1">
    <citation type="journal article" date="2018" name="Comp. Biochem. Physiol.">
        <title>Peptidomic analysis of the host-defense peptides in skin secretions of the Trinidadian leaf frog Phyllomedusa trinitatis (Phyllomedusidae).</title>
        <authorList>
            <person name="Mechkarska M."/>
            <person name="Coquet L."/>
            <person name="Leprince J."/>
            <person name="Auguste R.J."/>
            <person name="Jouenne T."/>
            <person name="Mangoni M.L."/>
            <person name="Conlon J.M."/>
        </authorList>
    </citation>
    <scope>PROTEIN SEQUENCE</scope>
    <scope>SUBCELLULAR LOCATION</scope>
    <scope>MASS SPECTROMETRY</scope>
    <source>
        <tissue evidence="3">Skin secretion</tissue>
    </source>
</reference>
<dbReference type="GO" id="GO:0005576">
    <property type="term" value="C:extracellular region"/>
    <property type="evidence" value="ECO:0007669"/>
    <property type="project" value="UniProtKB-SubCell"/>
</dbReference>
<dbReference type="GO" id="GO:0006952">
    <property type="term" value="P:defense response"/>
    <property type="evidence" value="ECO:0007669"/>
    <property type="project" value="UniProtKB-KW"/>
</dbReference>
<dbReference type="InterPro" id="IPR022731">
    <property type="entry name" value="Dermaseptin_dom"/>
</dbReference>
<dbReference type="Pfam" id="PF12121">
    <property type="entry name" value="DD_K"/>
    <property type="match status" value="1"/>
</dbReference>
<comment type="function">
    <text evidence="1">Has antimicrobial activity.</text>
</comment>
<comment type="subcellular location">
    <subcellularLocation>
        <location evidence="2">Secreted</location>
    </subcellularLocation>
</comment>
<comment type="tissue specificity">
    <text evidence="5">Expressed by the skin glands.</text>
</comment>
<comment type="mass spectrometry" mass="2779.6" method="MALDI" evidence="2"/>
<comment type="similarity">
    <text evidence="4">Belongs to the frog skin active peptide (FSAP) family. Dermaseptin subfamily.</text>
</comment>
<organism evidence="3">
    <name type="scientific">Phyllomedusa trinitatis</name>
    <name type="common">Trinidad leaf frog</name>
    <dbReference type="NCBI Taxonomy" id="332092"/>
    <lineage>
        <taxon>Eukaryota</taxon>
        <taxon>Metazoa</taxon>
        <taxon>Chordata</taxon>
        <taxon>Craniata</taxon>
        <taxon>Vertebrata</taxon>
        <taxon>Euteleostomi</taxon>
        <taxon>Amphibia</taxon>
        <taxon>Batrachia</taxon>
        <taxon>Anura</taxon>
        <taxon>Neobatrachia</taxon>
        <taxon>Hyloidea</taxon>
        <taxon>Hylidae</taxon>
        <taxon>Phyllomedusinae</taxon>
        <taxon>Phyllomedusa</taxon>
    </lineage>
</organism>
<accession>C0HLD2</accession>
<keyword id="KW-0878">Amphibian defense peptide</keyword>
<keyword id="KW-0929">Antimicrobial</keyword>
<keyword id="KW-0903">Direct protein sequencing</keyword>
<keyword id="KW-0964">Secreted</keyword>
<feature type="peptide" id="PRO_0000445219" description="Dermaseptin-6TR" evidence="2">
    <location>
        <begin position="1"/>
        <end position="28"/>
    </location>
</feature>